<evidence type="ECO:0000255" key="1"/>
<evidence type="ECO:0000269" key="2">
    <source>
    </source>
</evidence>
<evidence type="ECO:0000269" key="3">
    <source>
    </source>
</evidence>
<evidence type="ECO:0000269" key="4">
    <source>
    </source>
</evidence>
<evidence type="ECO:0000269" key="5">
    <source>
    </source>
</evidence>
<evidence type="ECO:0000269" key="6">
    <source>
    </source>
</evidence>
<evidence type="ECO:0000269" key="7">
    <source>
    </source>
</evidence>
<evidence type="ECO:0000305" key="8"/>
<evidence type="ECO:0007744" key="9">
    <source>
    </source>
</evidence>
<evidence type="ECO:0007829" key="10">
    <source>
        <dbReference type="PDB" id="3F7F"/>
    </source>
</evidence>
<evidence type="ECO:0007829" key="11">
    <source>
        <dbReference type="PDB" id="3H7N"/>
    </source>
</evidence>
<evidence type="ECO:0007829" key="12">
    <source>
        <dbReference type="PDB" id="3HXR"/>
    </source>
</evidence>
<gene>
    <name type="primary">NUP120</name>
    <name type="synonym">RAT2</name>
    <name type="ordered locus">YKL057C</name>
    <name type="ORF">YKL313</name>
    <name type="ORF">YKL314</name>
</gene>
<accession>P35729</accession>
<accession>D6VXN0</accession>
<accession>P35730</accession>
<sequence length="1037" mass="120448">MACLSRIDANLLQYYEKPEPNNTVDLYVSNNSNNNGLKEGDKSISTPVPQPYGSEYSNCLLLSNSEYICYHFSSRSTLLTFYPLSDAYHGKTINIHLPNASMNQRYTLTIQEVEQQLLVNVILKDGSFLTLQLPLSFLFSSANTLNGEWFHLQNPYDFTVRVPHFLFYVSPQFSVVFLEDGGLLGLKKVDGVHYEPLLFNDNSYLKSLTRFFSRSSKSDYDSVISCKLFHERYLIVLTQNCHLKIWDLTSFTLIQDYDMVSQSDSDPSHFRKVEAVGEYLSLYNNTLVTLLPLENGLFQMGTLLVDSSGILTYTFQNNIPTNLSASAIWSIVDLVLTRPLELNVEASYLNLIVLWKSGTASKLQILNVNDESFKNYEWIESVNKSLVDLQSEHDLDIVTKTGDVERGFCNLKSRYGTQIFERAQQILSENKIIMAHNEDEEYLANLETILRDVKTAFNEASSITLYGDEIILVNCFQPYNHSLYKLNTTVENWFYNMHSETDGSELFKYLRTLNGFASTLSNDVLRSISKKFLDIITGELPDSMTTVEKFTDIFKNCLENQFEITNLKILFDELNSFDIPVVLNDLINNQMKPGIFWKKDFISAIKFDGFTSIISLESLHQLLSIHYRITLQVLLTFVLFDLDTEIFGQHISTLLDLHYKQFLLLNLYRQDKCLLAEVLLKDSSEFSFGVKFFNYGQLIAYIDSLNSNVYNASITENSFFMTFFRSYIIENTSHKNIRFFLENVECPFYLRHNEVQEFMFAMTLFSCGNFDQSYEIFQLHDYPEAINDKLPTFLEDLKSENYHGDSIWKDLLCTFTVPYRHSAFYYQLSLLFDRNNSQEFALKCISKSAEYSLKEIQIEELQDFKEKQHIHYLNLLIHFRMFEEVLDVLRLGHECLSDTVRTNFLQLLLQEDIYSRDFFSTLLRLCNAHSDNGELYLRTVDIKIVDSILSQNLRSGDWECFKKLYCFRMLNKSERAAAEVLYQYILMQADLDVIRKRKCYLMVINVLSSFDSAYDQWILNGSKVVTLTDLRDELRGL</sequence>
<dbReference type="EMBL" id="X75781">
    <property type="protein sequence ID" value="CAA53414.1"/>
    <property type="status" value="ALT_FRAME"/>
    <property type="molecule type" value="Genomic_DNA"/>
</dbReference>
<dbReference type="EMBL" id="X75781">
    <property type="protein sequence ID" value="CAA53415.1"/>
    <property type="status" value="ALT_FRAME"/>
    <property type="molecule type" value="Genomic_DNA"/>
</dbReference>
<dbReference type="EMBL" id="Z28057">
    <property type="protein sequence ID" value="CAA81894.1"/>
    <property type="molecule type" value="Genomic_DNA"/>
</dbReference>
<dbReference type="EMBL" id="BK006944">
    <property type="protein sequence ID" value="DAA09100.1"/>
    <property type="molecule type" value="Genomic_DNA"/>
</dbReference>
<dbReference type="PIR" id="S37879">
    <property type="entry name" value="S37879"/>
</dbReference>
<dbReference type="RefSeq" id="NP_012866.1">
    <property type="nucleotide sequence ID" value="NM_001179623.1"/>
</dbReference>
<dbReference type="PDB" id="3F7F">
    <property type="method" value="X-ray"/>
    <property type="resolution" value="2.60 A"/>
    <property type="chains" value="A/B/C/D=1-729"/>
</dbReference>
<dbReference type="PDB" id="3H7N">
    <property type="method" value="X-ray"/>
    <property type="resolution" value="3.00 A"/>
    <property type="chains" value="A/B/C/D=1-729"/>
</dbReference>
<dbReference type="PDB" id="3HXR">
    <property type="method" value="X-ray"/>
    <property type="resolution" value="3.00 A"/>
    <property type="chains" value="A=1-757"/>
</dbReference>
<dbReference type="PDB" id="4XMM">
    <property type="method" value="X-ray"/>
    <property type="resolution" value="7.38 A"/>
    <property type="chains" value="E=2-1037"/>
</dbReference>
<dbReference type="PDB" id="4XMN">
    <property type="method" value="X-ray"/>
    <property type="resolution" value="7.60 A"/>
    <property type="chains" value="E=1-1037"/>
</dbReference>
<dbReference type="PDB" id="6X06">
    <property type="method" value="X-ray"/>
    <property type="resolution" value="4.27 A"/>
    <property type="chains" value="A=1-757"/>
</dbReference>
<dbReference type="PDB" id="7N84">
    <property type="method" value="EM"/>
    <property type="resolution" value="11.60 A"/>
    <property type="chains" value="a/l=1-1037"/>
</dbReference>
<dbReference type="PDB" id="7N9F">
    <property type="method" value="EM"/>
    <property type="resolution" value="37.00 A"/>
    <property type="chains" value="a/h=1-1037"/>
</dbReference>
<dbReference type="PDB" id="8TIE">
    <property type="method" value="EM"/>
    <property type="resolution" value="8.10 A"/>
    <property type="chains" value="a/l=1-1037"/>
</dbReference>
<dbReference type="PDBsum" id="3F7F"/>
<dbReference type="PDBsum" id="3H7N"/>
<dbReference type="PDBsum" id="3HXR"/>
<dbReference type="PDBsum" id="4XMM"/>
<dbReference type="PDBsum" id="4XMN"/>
<dbReference type="PDBsum" id="6X06"/>
<dbReference type="PDBsum" id="7N84"/>
<dbReference type="PDBsum" id="7N9F"/>
<dbReference type="PDBsum" id="8TIE"/>
<dbReference type="EMDB" id="EMD-24231"/>
<dbReference type="EMDB" id="EMD-24258"/>
<dbReference type="EMDB" id="EMD-41285"/>
<dbReference type="SMR" id="P35729"/>
<dbReference type="BioGRID" id="34076">
    <property type="interactions" value="344"/>
</dbReference>
<dbReference type="ComplexPortal" id="CPX-824">
    <property type="entry name" value="Nuclear pore complex"/>
</dbReference>
<dbReference type="DIP" id="DIP-2721N"/>
<dbReference type="FunCoup" id="P35729">
    <property type="interactions" value="214"/>
</dbReference>
<dbReference type="IntAct" id="P35729">
    <property type="interactions" value="24"/>
</dbReference>
<dbReference type="MINT" id="P35729"/>
<dbReference type="STRING" id="4932.YKL057C"/>
<dbReference type="TCDB" id="1.I.1.1.1">
    <property type="family name" value="the nuclear pore complex (npc) family"/>
</dbReference>
<dbReference type="iPTMnet" id="P35729"/>
<dbReference type="PaxDb" id="4932-YKL057C"/>
<dbReference type="PeptideAtlas" id="P35729"/>
<dbReference type="ABCD" id="P35729">
    <property type="antibodies" value="1 sequenced antibody"/>
</dbReference>
<dbReference type="EnsemblFungi" id="YKL057C_mRNA">
    <property type="protein sequence ID" value="YKL057C"/>
    <property type="gene ID" value="YKL057C"/>
</dbReference>
<dbReference type="GeneID" id="853808"/>
<dbReference type="KEGG" id="sce:YKL057C"/>
<dbReference type="AGR" id="SGD:S000001540"/>
<dbReference type="SGD" id="S000001540">
    <property type="gene designation" value="NUP120"/>
</dbReference>
<dbReference type="VEuPathDB" id="FungiDB:YKL057C"/>
<dbReference type="eggNOG" id="ENOG502QQWQ">
    <property type="taxonomic scope" value="Eukaryota"/>
</dbReference>
<dbReference type="HOGENOM" id="CLU_294409_0_0_1"/>
<dbReference type="InParanoid" id="P35729"/>
<dbReference type="OMA" id="ILELYMI"/>
<dbReference type="OrthoDB" id="67716at2759"/>
<dbReference type="BioCyc" id="YEAST:G3O-31856-MONOMER"/>
<dbReference type="Reactome" id="R-SCE-159236">
    <property type="pathway name" value="Transport of Mature mRNA derived from an Intron-Containing Transcript"/>
</dbReference>
<dbReference type="Reactome" id="R-SCE-3371453">
    <property type="pathway name" value="Regulation of HSF1-mediated heat shock response"/>
</dbReference>
<dbReference type="Reactome" id="R-SCE-4085377">
    <property type="pathway name" value="SUMOylation of SUMOylation proteins"/>
</dbReference>
<dbReference type="Reactome" id="R-SCE-4551638">
    <property type="pathway name" value="SUMOylation of chromatin organization proteins"/>
</dbReference>
<dbReference type="Reactome" id="R-SCE-4570464">
    <property type="pathway name" value="SUMOylation of RNA binding proteins"/>
</dbReference>
<dbReference type="BioGRID-ORCS" id="853808">
    <property type="hits" value="7 hits in 10 CRISPR screens"/>
</dbReference>
<dbReference type="EvolutionaryTrace" id="P35729"/>
<dbReference type="PRO" id="PR:P35729"/>
<dbReference type="Proteomes" id="UP000002311">
    <property type="component" value="Chromosome XI"/>
</dbReference>
<dbReference type="RNAct" id="P35729">
    <property type="molecule type" value="protein"/>
</dbReference>
<dbReference type="GO" id="GO:0000781">
    <property type="term" value="C:chromosome, telomeric region"/>
    <property type="evidence" value="ECO:0007669"/>
    <property type="project" value="GOC"/>
</dbReference>
<dbReference type="GO" id="GO:0005635">
    <property type="term" value="C:nuclear envelope"/>
    <property type="evidence" value="ECO:0000303"/>
    <property type="project" value="ComplexPortal"/>
</dbReference>
<dbReference type="GO" id="GO:0031965">
    <property type="term" value="C:nuclear membrane"/>
    <property type="evidence" value="ECO:0007669"/>
    <property type="project" value="UniProtKB-SubCell"/>
</dbReference>
<dbReference type="GO" id="GO:0005643">
    <property type="term" value="C:nuclear pore"/>
    <property type="evidence" value="ECO:0000314"/>
    <property type="project" value="SGD"/>
</dbReference>
<dbReference type="GO" id="GO:0031080">
    <property type="term" value="C:nuclear pore outer ring"/>
    <property type="evidence" value="ECO:0000314"/>
    <property type="project" value="SGD"/>
</dbReference>
<dbReference type="GO" id="GO:0042802">
    <property type="term" value="F:identical protein binding"/>
    <property type="evidence" value="ECO:0000353"/>
    <property type="project" value="IntAct"/>
</dbReference>
<dbReference type="GO" id="GO:0017056">
    <property type="term" value="F:structural constituent of nuclear pore"/>
    <property type="evidence" value="ECO:0000315"/>
    <property type="project" value="SGD"/>
</dbReference>
<dbReference type="GO" id="GO:0006302">
    <property type="term" value="P:double-strand break repair"/>
    <property type="evidence" value="ECO:0000315"/>
    <property type="project" value="SGD"/>
</dbReference>
<dbReference type="GO" id="GO:0006406">
    <property type="term" value="P:mRNA export from nucleus"/>
    <property type="evidence" value="ECO:0000315"/>
    <property type="project" value="SGD"/>
</dbReference>
<dbReference type="GO" id="GO:0031990">
    <property type="term" value="P:mRNA export from nucleus in response to heat stress"/>
    <property type="evidence" value="ECO:0000315"/>
    <property type="project" value="SGD"/>
</dbReference>
<dbReference type="GO" id="GO:0000122">
    <property type="term" value="P:negative regulation of transcription by RNA polymerase II"/>
    <property type="evidence" value="ECO:0000315"/>
    <property type="project" value="SGD"/>
</dbReference>
<dbReference type="GO" id="GO:0051664">
    <property type="term" value="P:nuclear pore localization"/>
    <property type="evidence" value="ECO:0000315"/>
    <property type="project" value="SGD"/>
</dbReference>
<dbReference type="GO" id="GO:0006913">
    <property type="term" value="P:nucleocytoplasmic transport"/>
    <property type="evidence" value="ECO:0000303"/>
    <property type="project" value="ComplexPortal"/>
</dbReference>
<dbReference type="GO" id="GO:0045893">
    <property type="term" value="P:positive regulation of DNA-templated transcription"/>
    <property type="evidence" value="ECO:0000314"/>
    <property type="project" value="SGD"/>
</dbReference>
<dbReference type="GO" id="GO:0045944">
    <property type="term" value="P:positive regulation of transcription by RNA polymerase II"/>
    <property type="evidence" value="ECO:0000315"/>
    <property type="project" value="SGD"/>
</dbReference>
<dbReference type="GO" id="GO:0000973">
    <property type="term" value="P:post-transcriptional tethering of RNA polymerase II gene DNA at nuclear periphery"/>
    <property type="evidence" value="ECO:0000315"/>
    <property type="project" value="SGD"/>
</dbReference>
<dbReference type="GO" id="GO:0006611">
    <property type="term" value="P:protein export from nucleus"/>
    <property type="evidence" value="ECO:0000315"/>
    <property type="project" value="SGD"/>
</dbReference>
<dbReference type="GO" id="GO:0006606">
    <property type="term" value="P:protein import into nucleus"/>
    <property type="evidence" value="ECO:0000315"/>
    <property type="project" value="SGD"/>
</dbReference>
<dbReference type="GO" id="GO:0000055">
    <property type="term" value="P:ribosomal large subunit export from nucleus"/>
    <property type="evidence" value="ECO:0000315"/>
    <property type="project" value="SGD"/>
</dbReference>
<dbReference type="GO" id="GO:0031509">
    <property type="term" value="P:subtelomeric heterochromatin formation"/>
    <property type="evidence" value="ECO:0000315"/>
    <property type="project" value="SGD"/>
</dbReference>
<dbReference type="GO" id="GO:0034398">
    <property type="term" value="P:telomere tethering at nuclear periphery"/>
    <property type="evidence" value="ECO:0000315"/>
    <property type="project" value="SGD"/>
</dbReference>
<dbReference type="DisProt" id="DP02157"/>
<dbReference type="InterPro" id="IPR021717">
    <property type="entry name" value="Nucleoporin_Nup160"/>
</dbReference>
<dbReference type="InterPro" id="IPR055090">
    <property type="entry name" value="NUP120_helical_saccharomycetes"/>
</dbReference>
<dbReference type="PANTHER" id="PTHR21286">
    <property type="entry name" value="NUCLEAR PORE COMPLEX PROTEIN NUP160"/>
    <property type="match status" value="1"/>
</dbReference>
<dbReference type="PANTHER" id="PTHR21286:SF0">
    <property type="entry name" value="NUCLEAR PORE COMPLEX PROTEIN NUP160"/>
    <property type="match status" value="1"/>
</dbReference>
<dbReference type="Pfam" id="PF11715">
    <property type="entry name" value="Beta-prop_Nup120_160"/>
    <property type="match status" value="1"/>
</dbReference>
<dbReference type="Pfam" id="PF22114">
    <property type="entry name" value="NUP120_helical_2"/>
    <property type="match status" value="1"/>
</dbReference>
<organism>
    <name type="scientific">Saccharomyces cerevisiae (strain ATCC 204508 / S288c)</name>
    <name type="common">Baker's yeast</name>
    <dbReference type="NCBI Taxonomy" id="559292"/>
    <lineage>
        <taxon>Eukaryota</taxon>
        <taxon>Fungi</taxon>
        <taxon>Dikarya</taxon>
        <taxon>Ascomycota</taxon>
        <taxon>Saccharomycotina</taxon>
        <taxon>Saccharomycetes</taxon>
        <taxon>Saccharomycetales</taxon>
        <taxon>Saccharomycetaceae</taxon>
        <taxon>Saccharomyces</taxon>
    </lineage>
</organism>
<reference key="1">
    <citation type="journal article" date="1994" name="Yeast">
        <title>Sequence of a 28.6 kb region of yeast chromosome XI includes the FBA1 and TOA2 genes, an open reading frame (ORF) similar to a translationally controlled tumour protein, one ORF containing motifs also found in plant storage proteins and 13 ORFs with weak or no homology to known proteins.</title>
        <authorList>
            <person name="Rasmussen S.W."/>
        </authorList>
    </citation>
    <scope>NUCLEOTIDE SEQUENCE [GENOMIC DNA]</scope>
    <source>
        <strain>ATCC 204508 / S288c</strain>
    </source>
</reference>
<reference key="2">
    <citation type="journal article" date="1994" name="Nature">
        <title>Complete DNA sequence of yeast chromosome XI.</title>
        <authorList>
            <person name="Dujon B."/>
            <person name="Alexandraki D."/>
            <person name="Andre B."/>
            <person name="Ansorge W."/>
            <person name="Baladron V."/>
            <person name="Ballesta J.P.G."/>
            <person name="Banrevi A."/>
            <person name="Bolle P.-A."/>
            <person name="Bolotin-Fukuhara M."/>
            <person name="Bossier P."/>
            <person name="Bou G."/>
            <person name="Boyer J."/>
            <person name="Buitrago M.J."/>
            <person name="Cheret G."/>
            <person name="Colleaux L."/>
            <person name="Daignan-Fornier B."/>
            <person name="del Rey F."/>
            <person name="Dion C."/>
            <person name="Domdey H."/>
            <person name="Duesterhoeft A."/>
            <person name="Duesterhus S."/>
            <person name="Entian K.-D."/>
            <person name="Erfle H."/>
            <person name="Esteban P.F."/>
            <person name="Feldmann H."/>
            <person name="Fernandes L."/>
            <person name="Fobo G.M."/>
            <person name="Fritz C."/>
            <person name="Fukuhara H."/>
            <person name="Gabel C."/>
            <person name="Gaillon L."/>
            <person name="Garcia-Cantalejo J.M."/>
            <person name="Garcia-Ramirez J.J."/>
            <person name="Gent M.E."/>
            <person name="Ghazvini M."/>
            <person name="Goffeau A."/>
            <person name="Gonzalez A."/>
            <person name="Grothues D."/>
            <person name="Guerreiro P."/>
            <person name="Hegemann J.H."/>
            <person name="Hewitt N."/>
            <person name="Hilger F."/>
            <person name="Hollenberg C.P."/>
            <person name="Horaitis O."/>
            <person name="Indge K.J."/>
            <person name="Jacquier A."/>
            <person name="James C.M."/>
            <person name="Jauniaux J.-C."/>
            <person name="Jimenez A."/>
            <person name="Keuchel H."/>
            <person name="Kirchrath L."/>
            <person name="Kleine K."/>
            <person name="Koetter P."/>
            <person name="Legrain P."/>
            <person name="Liebl S."/>
            <person name="Louis E.J."/>
            <person name="Maia e Silva A."/>
            <person name="Marck C."/>
            <person name="Monnier A.-L."/>
            <person name="Moestl D."/>
            <person name="Mueller S."/>
            <person name="Obermaier B."/>
            <person name="Oliver S.G."/>
            <person name="Pallier C."/>
            <person name="Pascolo S."/>
            <person name="Pfeiffer F."/>
            <person name="Philippsen P."/>
            <person name="Planta R.J."/>
            <person name="Pohl F.M."/>
            <person name="Pohl T.M."/>
            <person name="Poehlmann R."/>
            <person name="Portetelle D."/>
            <person name="Purnelle B."/>
            <person name="Puzos V."/>
            <person name="Ramezani Rad M."/>
            <person name="Rasmussen S.W."/>
            <person name="Remacha M.A."/>
            <person name="Revuelta J.L."/>
            <person name="Richard G.-F."/>
            <person name="Rieger M."/>
            <person name="Rodrigues-Pousada C."/>
            <person name="Rose M."/>
            <person name="Rupp T."/>
            <person name="Santos M.A."/>
            <person name="Schwager C."/>
            <person name="Sensen C."/>
            <person name="Skala J."/>
            <person name="Soares H."/>
            <person name="Sor F."/>
            <person name="Stegemann J."/>
            <person name="Tettelin H."/>
            <person name="Thierry A."/>
            <person name="Tzermia M."/>
            <person name="Urrestarazu L.A."/>
            <person name="van Dyck L."/>
            <person name="van Vliet-Reedijk J.C."/>
            <person name="Valens M."/>
            <person name="Vandenbol M."/>
            <person name="Vilela C."/>
            <person name="Vissers S."/>
            <person name="von Wettstein D."/>
            <person name="Voss H."/>
            <person name="Wiemann S."/>
            <person name="Xu G."/>
            <person name="Zimmermann J."/>
            <person name="Haasemann M."/>
            <person name="Becker I."/>
            <person name="Mewes H.-W."/>
        </authorList>
    </citation>
    <scope>NUCLEOTIDE SEQUENCE [LARGE SCALE GENOMIC DNA]</scope>
    <source>
        <strain>ATCC 204508 / S288c</strain>
    </source>
</reference>
<reference key="3">
    <citation type="journal article" date="2014" name="G3 (Bethesda)">
        <title>The reference genome sequence of Saccharomyces cerevisiae: Then and now.</title>
        <authorList>
            <person name="Engel S.R."/>
            <person name="Dietrich F.S."/>
            <person name="Fisk D.G."/>
            <person name="Binkley G."/>
            <person name="Balakrishnan R."/>
            <person name="Costanzo M.C."/>
            <person name="Dwight S.S."/>
            <person name="Hitz B.C."/>
            <person name="Karra K."/>
            <person name="Nash R.S."/>
            <person name="Weng S."/>
            <person name="Wong E.D."/>
            <person name="Lloyd P."/>
            <person name="Skrzypek M.S."/>
            <person name="Miyasato S.R."/>
            <person name="Simison M."/>
            <person name="Cherry J.M."/>
        </authorList>
    </citation>
    <scope>GENOME REANNOTATION</scope>
    <source>
        <strain>ATCC 204508 / S288c</strain>
    </source>
</reference>
<reference key="4">
    <citation type="journal article" date="1995" name="J. Cell Biol.">
        <title>Nup120p: a yeast nucleoporin required for NPC distribution and mRNA transport.</title>
        <authorList>
            <person name="Aitchison J.D."/>
            <person name="Blobel G."/>
            <person name="Rout M.P."/>
        </authorList>
    </citation>
    <scope>PROTEIN SEQUENCE OF 189-206 AND 800-807</scope>
    <scope>CHARACTERIZATION</scope>
    <scope>NUCLEAR MRNA EXPORT</scope>
</reference>
<reference key="5">
    <citation type="journal article" date="1995" name="J. Cell Biol.">
        <title>Nuclear pore complex clustering and nuclear accumulation of poly(A)+ RNA associated with mutation of the Saccharomyces cerevisiae RAT2/NUP120 gene.</title>
        <authorList>
            <person name="Heath C.V."/>
            <person name="Copeland C.S."/>
            <person name="Amberg D.C."/>
            <person name="Del Priore V."/>
            <person name="Snyder M."/>
            <person name="Cole C.N."/>
        </authorList>
    </citation>
    <scope>FUNCTION</scope>
    <scope>NPC ASSEMBLY AND DISTRIBUTION</scope>
</reference>
<reference key="6">
    <citation type="journal article" date="1996" name="Cell">
        <title>A novel complex of nucleoporins, which includes Sec13p and a Sec13p homolog, is essential for normal nuclear pores.</title>
        <authorList>
            <person name="Siniossoglou S."/>
            <person name="Wimmer C."/>
            <person name="Rieger M."/>
            <person name="Doye V."/>
            <person name="Tekotte H."/>
            <person name="Weise C."/>
            <person name="Emig S."/>
            <person name="Segref A."/>
            <person name="Hurt E.C."/>
        </authorList>
    </citation>
    <scope>FUNCTION</scope>
    <scope>NUCLEAR ENVELOPE ORGANIZATION</scope>
</reference>
<reference key="7">
    <citation type="journal article" date="2000" name="Mol. Biol. Cell">
        <title>Factors affecting nuclear export of the 60S ribosomal subunit in vivo.</title>
        <authorList>
            <person name="Stage-Zimmermann T."/>
            <person name="Schmidt U."/>
            <person name="Silver P.A."/>
        </authorList>
    </citation>
    <scope>FUNCTION</scope>
    <scope>PRE-RIBOSOME EXPORT</scope>
</reference>
<reference key="8">
    <citation type="journal article" date="2000" name="J. Cell Biol.">
        <title>The yeast nuclear pore complex: composition, architecture, and transport mechanism.</title>
        <authorList>
            <person name="Rout M.P."/>
            <person name="Aitchison J.D."/>
            <person name="Suprapto A."/>
            <person name="Hjertaas K."/>
            <person name="Zhao Y."/>
            <person name="Chait B.T."/>
        </authorList>
    </citation>
    <scope>FUNCTION</scope>
    <scope>IDENTIFICATION IN THE NUCLEAR PORE COMPLEX</scope>
    <scope>SUBCELLULAR LOCATION</scope>
</reference>
<reference key="9">
    <citation type="journal article" date="2002" name="EMBO J.">
        <title>Modular self-assembly of a Y-shaped multiprotein complex from seven nucleoporins.</title>
        <authorList>
            <person name="Lutzmann M."/>
            <person name="Kunze R."/>
            <person name="Buerer A."/>
            <person name="Aebi U."/>
            <person name="Hurt E.C."/>
        </authorList>
    </citation>
    <scope>FUNCTION</scope>
    <scope>NUP84 NPC SUBCOMPLEX ASSEMBLY/STRUCTURE</scope>
</reference>
<reference key="10">
    <citation type="journal article" date="2003" name="J. Biol. Chem.">
        <title>Nuclear accumulation of the small GTPase Gsp1p depends on nucleoporins Nup133p, Rat2p/Nup120p, Nup85p, Nic96p, and the acetyl-CoA carboxylase Acc1p.</title>
        <authorList>
            <person name="Gao H."/>
            <person name="Sumanaweera N."/>
            <person name="Bailer S.M."/>
            <person name="Stochaj U."/>
        </authorList>
    </citation>
    <scope>FUNCTION</scope>
    <scope>NUCLEAR GSP1 IMPORT</scope>
</reference>
<reference key="11">
    <citation type="journal article" date="2003" name="Dev. Cell">
        <title>Peering through the pore: nuclear pore complex structure, assembly, and function.</title>
        <authorList>
            <person name="Suntharalingam M."/>
            <person name="Wente S.R."/>
        </authorList>
    </citation>
    <scope>REVIEW</scope>
</reference>
<reference key="12">
    <citation type="journal article" date="2008" name="Mol. Cell. Proteomics">
        <title>A multidimensional chromatography technology for in-depth phosphoproteome analysis.</title>
        <authorList>
            <person name="Albuquerque C.P."/>
            <person name="Smolka M.B."/>
            <person name="Payne S.H."/>
            <person name="Bafna V."/>
            <person name="Eng J."/>
            <person name="Zhou H."/>
        </authorList>
    </citation>
    <scope>PHOSPHORYLATION [LARGE SCALE ANALYSIS] AT THR-417</scope>
    <scope>IDENTIFICATION BY MASS SPECTROMETRY [LARGE SCALE ANALYSIS]</scope>
</reference>
<protein>
    <recommendedName>
        <fullName>Nucleoporin NUP120</fullName>
    </recommendedName>
    <alternativeName>
        <fullName>Nuclear pore protein NUP120</fullName>
    </alternativeName>
</protein>
<name>NU120_YEAST</name>
<keyword id="KW-0002">3D-structure</keyword>
<keyword id="KW-0175">Coiled coil</keyword>
<keyword id="KW-0903">Direct protein sequencing</keyword>
<keyword id="KW-0472">Membrane</keyword>
<keyword id="KW-0509">mRNA transport</keyword>
<keyword id="KW-0906">Nuclear pore complex</keyword>
<keyword id="KW-0539">Nucleus</keyword>
<keyword id="KW-0597">Phosphoprotein</keyword>
<keyword id="KW-0653">Protein transport</keyword>
<keyword id="KW-1185">Reference proteome</keyword>
<keyword id="KW-0811">Translocation</keyword>
<keyword id="KW-0813">Transport</keyword>
<feature type="chain" id="PRO_0000204836" description="Nucleoporin NUP120">
    <location>
        <begin position="1"/>
        <end position="1037"/>
    </location>
</feature>
<feature type="region of interest" description="Leucine-zipper 1" evidence="1">
    <location>
        <begin position="131"/>
        <end position="152"/>
    </location>
</feature>
<feature type="region of interest" description="Leucine-zipper 2" evidence="1">
    <location>
        <begin position="290"/>
        <end position="311"/>
    </location>
</feature>
<feature type="modified residue" description="Phosphothreonine" evidence="9">
    <location>
        <position position="417"/>
    </location>
</feature>
<feature type="strand" evidence="10">
    <location>
        <begin position="2"/>
        <end position="10"/>
    </location>
</feature>
<feature type="turn" evidence="10">
    <location>
        <begin position="11"/>
        <end position="14"/>
    </location>
</feature>
<feature type="strand" evidence="10">
    <location>
        <begin position="16"/>
        <end position="19"/>
    </location>
</feature>
<feature type="strand" evidence="10">
    <location>
        <begin position="23"/>
        <end position="26"/>
    </location>
</feature>
<feature type="strand" evidence="10">
    <location>
        <begin position="55"/>
        <end position="61"/>
    </location>
</feature>
<feature type="strand" evidence="12">
    <location>
        <begin position="63"/>
        <end position="65"/>
    </location>
</feature>
<feature type="strand" evidence="10">
    <location>
        <begin position="67"/>
        <end position="72"/>
    </location>
</feature>
<feature type="strand" evidence="10">
    <location>
        <begin position="78"/>
        <end position="83"/>
    </location>
</feature>
<feature type="helix" evidence="10">
    <location>
        <begin position="84"/>
        <end position="86"/>
    </location>
</feature>
<feature type="turn" evidence="10">
    <location>
        <begin position="87"/>
        <end position="89"/>
    </location>
</feature>
<feature type="strand" evidence="10">
    <location>
        <begin position="92"/>
        <end position="96"/>
    </location>
</feature>
<feature type="strand" evidence="11">
    <location>
        <begin position="101"/>
        <end position="103"/>
    </location>
</feature>
<feature type="helix" evidence="10">
    <location>
        <begin position="104"/>
        <end position="107"/>
    </location>
</feature>
<feature type="strand" evidence="10">
    <location>
        <begin position="108"/>
        <end position="112"/>
    </location>
</feature>
<feature type="strand" evidence="10">
    <location>
        <begin position="114"/>
        <end position="126"/>
    </location>
</feature>
<feature type="strand" evidence="10">
    <location>
        <begin position="128"/>
        <end position="134"/>
    </location>
</feature>
<feature type="helix" evidence="10">
    <location>
        <begin position="135"/>
        <end position="139"/>
    </location>
</feature>
<feature type="turn" evidence="10">
    <location>
        <begin position="158"/>
        <end position="160"/>
    </location>
</feature>
<feature type="strand" evidence="10">
    <location>
        <begin position="163"/>
        <end position="168"/>
    </location>
</feature>
<feature type="strand" evidence="10">
    <location>
        <begin position="170"/>
        <end position="178"/>
    </location>
</feature>
<feature type="strand" evidence="12">
    <location>
        <begin position="179"/>
        <end position="181"/>
    </location>
</feature>
<feature type="strand" evidence="12">
    <location>
        <begin position="183"/>
        <end position="186"/>
    </location>
</feature>
<feature type="strand" evidence="10">
    <location>
        <begin position="187"/>
        <end position="192"/>
    </location>
</feature>
<feature type="helix" evidence="10">
    <location>
        <begin position="203"/>
        <end position="208"/>
    </location>
</feature>
<feature type="strand" evidence="11">
    <location>
        <begin position="216"/>
        <end position="219"/>
    </location>
</feature>
<feature type="strand" evidence="10">
    <location>
        <begin position="223"/>
        <end position="229"/>
    </location>
</feature>
<feature type="turn" evidence="10">
    <location>
        <begin position="230"/>
        <end position="232"/>
    </location>
</feature>
<feature type="strand" evidence="10">
    <location>
        <begin position="233"/>
        <end position="238"/>
    </location>
</feature>
<feature type="strand" evidence="10">
    <location>
        <begin position="242"/>
        <end position="247"/>
    </location>
</feature>
<feature type="turn" evidence="10">
    <location>
        <begin position="248"/>
        <end position="251"/>
    </location>
</feature>
<feature type="strand" evidence="10">
    <location>
        <begin position="252"/>
        <end position="258"/>
    </location>
</feature>
<feature type="turn" evidence="10">
    <location>
        <begin position="259"/>
        <end position="262"/>
    </location>
</feature>
<feature type="strand" evidence="10">
    <location>
        <begin position="280"/>
        <end position="291"/>
    </location>
</feature>
<feature type="strand" evidence="10">
    <location>
        <begin position="293"/>
        <end position="295"/>
    </location>
</feature>
<feature type="strand" evidence="10">
    <location>
        <begin position="297"/>
        <end position="304"/>
    </location>
</feature>
<feature type="strand" evidence="11">
    <location>
        <begin position="307"/>
        <end position="309"/>
    </location>
</feature>
<feature type="strand" evidence="10">
    <location>
        <begin position="312"/>
        <end position="314"/>
    </location>
</feature>
<feature type="strand" evidence="10">
    <location>
        <begin position="318"/>
        <end position="320"/>
    </location>
</feature>
<feature type="turn" evidence="10">
    <location>
        <begin position="325"/>
        <end position="327"/>
    </location>
</feature>
<feature type="strand" evidence="10">
    <location>
        <begin position="330"/>
        <end position="338"/>
    </location>
</feature>
<feature type="strand" evidence="12">
    <location>
        <begin position="343"/>
        <end position="345"/>
    </location>
</feature>
<feature type="strand" evidence="10">
    <location>
        <begin position="348"/>
        <end position="357"/>
    </location>
</feature>
<feature type="strand" evidence="10">
    <location>
        <begin position="360"/>
        <end position="368"/>
    </location>
</feature>
<feature type="strand" evidence="10">
    <location>
        <begin position="370"/>
        <end position="372"/>
    </location>
</feature>
<feature type="strand" evidence="10">
    <location>
        <begin position="375"/>
        <end position="381"/>
    </location>
</feature>
<feature type="strand" evidence="12">
    <location>
        <begin position="383"/>
        <end position="385"/>
    </location>
</feature>
<feature type="helix" evidence="10">
    <location>
        <begin position="386"/>
        <end position="392"/>
    </location>
</feature>
<feature type="helix" evidence="10">
    <location>
        <begin position="406"/>
        <end position="415"/>
    </location>
</feature>
<feature type="helix" evidence="10">
    <location>
        <begin position="417"/>
        <end position="428"/>
    </location>
</feature>
<feature type="turn" evidence="10">
    <location>
        <begin position="429"/>
        <end position="431"/>
    </location>
</feature>
<feature type="helix" evidence="10">
    <location>
        <begin position="440"/>
        <end position="457"/>
    </location>
</feature>
<feature type="strand" evidence="10">
    <location>
        <begin position="460"/>
        <end position="466"/>
    </location>
</feature>
<feature type="turn" evidence="10">
    <location>
        <begin position="467"/>
        <end position="469"/>
    </location>
</feature>
<feature type="strand" evidence="10">
    <location>
        <begin position="470"/>
        <end position="477"/>
    </location>
</feature>
<feature type="strand" evidence="10">
    <location>
        <begin position="480"/>
        <end position="486"/>
    </location>
</feature>
<feature type="helix" evidence="10">
    <location>
        <begin position="489"/>
        <end position="494"/>
    </location>
</feature>
<feature type="turn" evidence="10">
    <location>
        <begin position="495"/>
        <end position="499"/>
    </location>
</feature>
<feature type="helix" evidence="10">
    <location>
        <begin position="505"/>
        <end position="517"/>
    </location>
</feature>
<feature type="helix" evidence="10">
    <location>
        <begin position="522"/>
        <end position="537"/>
    </location>
</feature>
<feature type="strand" evidence="10">
    <location>
        <begin position="538"/>
        <end position="540"/>
    </location>
</feature>
<feature type="strand" evidence="11">
    <location>
        <begin position="542"/>
        <end position="544"/>
    </location>
</feature>
<feature type="helix" evidence="10">
    <location>
        <begin position="546"/>
        <end position="557"/>
    </location>
</feature>
<feature type="turn" evidence="10">
    <location>
        <begin position="558"/>
        <end position="560"/>
    </location>
</feature>
<feature type="helix" evidence="10">
    <location>
        <begin position="564"/>
        <end position="574"/>
    </location>
</feature>
<feature type="helix" evidence="10">
    <location>
        <begin position="579"/>
        <end position="588"/>
    </location>
</feature>
<feature type="turn" evidence="10">
    <location>
        <begin position="589"/>
        <end position="591"/>
    </location>
</feature>
<feature type="helix" evidence="10">
    <location>
        <begin position="609"/>
        <end position="639"/>
    </location>
</feature>
<feature type="turn" evidence="10">
    <location>
        <begin position="644"/>
        <end position="647"/>
    </location>
</feature>
<feature type="helix" evidence="10">
    <location>
        <begin position="648"/>
        <end position="670"/>
    </location>
</feature>
<feature type="helix" evidence="10">
    <location>
        <begin position="672"/>
        <end position="680"/>
    </location>
</feature>
<feature type="strand" evidence="10">
    <location>
        <begin position="681"/>
        <end position="684"/>
    </location>
</feature>
<feature type="strand" evidence="12">
    <location>
        <begin position="685"/>
        <end position="688"/>
    </location>
</feature>
<feature type="helix" evidence="10">
    <location>
        <begin position="695"/>
        <end position="711"/>
    </location>
</feature>
<feature type="helix" evidence="10">
    <location>
        <begin position="719"/>
        <end position="728"/>
    </location>
</feature>
<comment type="function">
    <text evidence="2 3 4 5 6 7">Functions as a component of the nuclear pore complex (NPC). NPC components, collectively referred to as nucleoporins (NUPs), can play the role of both NPC structural components and of docking or interaction partners for transiently associated nuclear transport factors. NUP120 is involved in nuclear poly(A)+ RNA and pre-ribosome export, in GSP1 nuclear import, in NPC assembly and distribution, as well as in nuclear envelope organization.</text>
</comment>
<comment type="subunit">
    <text evidence="2">Component of the nuclear pore complex (NPC). NPC constitutes the exclusive means of nucleocytoplasmic transport. NPCs allow the passive diffusion of ions and small molecules and the active, nuclear transport receptor-mediated bidirectional transport of macromolecules such as proteins, RNAs, ribonucleoparticles (RNPs), and ribosomal subunits across the nuclear envelope. Due to its 8-fold rotational symmetry, all subunits are present with 8 copies or multiples thereof. NUP120 is part of the heptameric 0.5 MDa autoassembling NUP84 NPC subcomplex (NUP84, NUP85, NUP120, NUP133, NUP145C, SEC13 and SEH1).</text>
</comment>
<comment type="interaction">
    <interactant intactId="EBI-11713">
        <id>P35729</id>
    </interactant>
    <interactant intactId="EBI-11713">
        <id>P35729</id>
        <label>NUP120</label>
    </interactant>
    <organismsDiffer>false</organismsDiffer>
    <experiments>4</experiments>
</comment>
<comment type="interaction">
    <interactant intactId="EBI-11713">
        <id>P35729</id>
    </interactant>
    <interactant intactId="EBI-11722">
        <id>P36161</id>
        <label>NUP133</label>
    </interactant>
    <organismsDiffer>false</organismsDiffer>
    <experiments>7</experiments>
</comment>
<comment type="interaction">
    <interactant intactId="EBI-11713">
        <id>P35729</id>
    </interactant>
    <interactant intactId="EBI-11730">
        <id>P49687</id>
        <label>NUP145</label>
    </interactant>
    <organismsDiffer>false</organismsDiffer>
    <experiments>24</experiments>
</comment>
<comment type="interaction">
    <interactant intactId="EBI-11713">
        <id>P35729</id>
    </interactant>
    <interactant intactId="EBI-12337">
        <id>P52891</id>
        <label>NUP84</label>
    </interactant>
    <organismsDiffer>false</organismsDiffer>
    <experiments>13</experiments>
</comment>
<comment type="interaction">
    <interactant intactId="EBI-11713">
        <id>P35729</id>
    </interactant>
    <interactant intactId="EBI-12345">
        <id>P46673</id>
        <label>NUP85</label>
    </interactant>
    <organismsDiffer>false</organismsDiffer>
    <experiments>22</experiments>
</comment>
<comment type="subcellular location">
    <subcellularLocation>
        <location evidence="2">Nucleus</location>
        <location evidence="2">Nuclear pore complex</location>
    </subcellularLocation>
    <subcellularLocation>
        <location>Nucleus membrane</location>
        <topology>Peripheral membrane protein</topology>
        <orientation>Cytoplasmic side</orientation>
    </subcellularLocation>
    <subcellularLocation>
        <location>Nucleus membrane</location>
        <topology>Peripheral membrane protein</topology>
        <orientation>Nucleoplasmic side</orientation>
    </subcellularLocation>
    <text>Symmetric distribution.</text>
</comment>
<comment type="sequence caution" evidence="8">
    <conflict type="frameshift">
        <sequence resource="EMBL-CDS" id="CAA53415"/>
    </conflict>
</comment>
<proteinExistence type="evidence at protein level"/>